<proteinExistence type="inferred from homology"/>
<gene>
    <name evidence="1" type="primary">glpK</name>
    <name type="ordered locus">XfasM23_1389</name>
</gene>
<dbReference type="EC" id="2.7.1.30" evidence="1"/>
<dbReference type="EMBL" id="CP001011">
    <property type="protein sequence ID" value="ACB92807.1"/>
    <property type="molecule type" value="Genomic_DNA"/>
</dbReference>
<dbReference type="RefSeq" id="WP_004088276.1">
    <property type="nucleotide sequence ID" value="NC_010577.1"/>
</dbReference>
<dbReference type="SMR" id="B2I618"/>
<dbReference type="GeneID" id="93905119"/>
<dbReference type="KEGG" id="xfn:XfasM23_1389"/>
<dbReference type="HOGENOM" id="CLU_009281_2_3_6"/>
<dbReference type="UniPathway" id="UPA00618">
    <property type="reaction ID" value="UER00672"/>
</dbReference>
<dbReference type="Proteomes" id="UP000001698">
    <property type="component" value="Chromosome"/>
</dbReference>
<dbReference type="GO" id="GO:0005829">
    <property type="term" value="C:cytosol"/>
    <property type="evidence" value="ECO:0007669"/>
    <property type="project" value="TreeGrafter"/>
</dbReference>
<dbReference type="GO" id="GO:0005524">
    <property type="term" value="F:ATP binding"/>
    <property type="evidence" value="ECO:0007669"/>
    <property type="project" value="UniProtKB-UniRule"/>
</dbReference>
<dbReference type="GO" id="GO:0004370">
    <property type="term" value="F:glycerol kinase activity"/>
    <property type="evidence" value="ECO:0000250"/>
    <property type="project" value="UniProtKB"/>
</dbReference>
<dbReference type="GO" id="GO:0019563">
    <property type="term" value="P:glycerol catabolic process"/>
    <property type="evidence" value="ECO:0007669"/>
    <property type="project" value="UniProtKB-UniRule"/>
</dbReference>
<dbReference type="GO" id="GO:0006071">
    <property type="term" value="P:glycerol metabolic process"/>
    <property type="evidence" value="ECO:0000250"/>
    <property type="project" value="UniProtKB"/>
</dbReference>
<dbReference type="GO" id="GO:0006072">
    <property type="term" value="P:glycerol-3-phosphate metabolic process"/>
    <property type="evidence" value="ECO:0007669"/>
    <property type="project" value="InterPro"/>
</dbReference>
<dbReference type="CDD" id="cd07786">
    <property type="entry name" value="FGGY_EcGK_like"/>
    <property type="match status" value="1"/>
</dbReference>
<dbReference type="FunFam" id="3.30.420.40:FF:000007">
    <property type="entry name" value="Glycerol kinase"/>
    <property type="match status" value="1"/>
</dbReference>
<dbReference type="FunFam" id="3.30.420.40:FF:000008">
    <property type="entry name" value="Glycerol kinase"/>
    <property type="match status" value="1"/>
</dbReference>
<dbReference type="Gene3D" id="3.30.420.40">
    <property type="match status" value="2"/>
</dbReference>
<dbReference type="HAMAP" id="MF_00186">
    <property type="entry name" value="Glycerol_kin"/>
    <property type="match status" value="1"/>
</dbReference>
<dbReference type="InterPro" id="IPR043129">
    <property type="entry name" value="ATPase_NBD"/>
</dbReference>
<dbReference type="InterPro" id="IPR000577">
    <property type="entry name" value="Carb_kinase_FGGY"/>
</dbReference>
<dbReference type="InterPro" id="IPR018483">
    <property type="entry name" value="Carb_kinase_FGGY_CS"/>
</dbReference>
<dbReference type="InterPro" id="IPR018485">
    <property type="entry name" value="FGGY_C"/>
</dbReference>
<dbReference type="InterPro" id="IPR018484">
    <property type="entry name" value="FGGY_N"/>
</dbReference>
<dbReference type="InterPro" id="IPR005999">
    <property type="entry name" value="Glycerol_kin"/>
</dbReference>
<dbReference type="NCBIfam" id="TIGR01311">
    <property type="entry name" value="glycerol_kin"/>
    <property type="match status" value="1"/>
</dbReference>
<dbReference type="NCBIfam" id="NF000756">
    <property type="entry name" value="PRK00047.1"/>
    <property type="match status" value="1"/>
</dbReference>
<dbReference type="PANTHER" id="PTHR10196:SF69">
    <property type="entry name" value="GLYCEROL KINASE"/>
    <property type="match status" value="1"/>
</dbReference>
<dbReference type="PANTHER" id="PTHR10196">
    <property type="entry name" value="SUGAR KINASE"/>
    <property type="match status" value="1"/>
</dbReference>
<dbReference type="Pfam" id="PF02782">
    <property type="entry name" value="FGGY_C"/>
    <property type="match status" value="1"/>
</dbReference>
<dbReference type="Pfam" id="PF00370">
    <property type="entry name" value="FGGY_N"/>
    <property type="match status" value="1"/>
</dbReference>
<dbReference type="PIRSF" id="PIRSF000538">
    <property type="entry name" value="GlpK"/>
    <property type="match status" value="1"/>
</dbReference>
<dbReference type="SUPFAM" id="SSF53067">
    <property type="entry name" value="Actin-like ATPase domain"/>
    <property type="match status" value="2"/>
</dbReference>
<dbReference type="PROSITE" id="PS00933">
    <property type="entry name" value="FGGY_KINASES_1"/>
    <property type="match status" value="1"/>
</dbReference>
<dbReference type="PROSITE" id="PS00445">
    <property type="entry name" value="FGGY_KINASES_2"/>
    <property type="match status" value="1"/>
</dbReference>
<keyword id="KW-0067">ATP-binding</keyword>
<keyword id="KW-0319">Glycerol metabolism</keyword>
<keyword id="KW-0418">Kinase</keyword>
<keyword id="KW-0547">Nucleotide-binding</keyword>
<keyword id="KW-0808">Transferase</keyword>
<protein>
    <recommendedName>
        <fullName evidence="1">Glycerol kinase</fullName>
        <ecNumber evidence="1">2.7.1.30</ecNumber>
    </recommendedName>
    <alternativeName>
        <fullName evidence="1">ATP:glycerol 3-phosphotransferase</fullName>
    </alternativeName>
    <alternativeName>
        <fullName evidence="1">Glycerokinase</fullName>
        <shortName evidence="1">GK</shortName>
    </alternativeName>
</protein>
<accession>B2I618</accession>
<name>GLPK_XYLF2</name>
<comment type="function">
    <text evidence="1">Key enzyme in the regulation of glycerol uptake and metabolism. Catalyzes the phosphorylation of glycerol to yield sn-glycerol 3-phosphate.</text>
</comment>
<comment type="catalytic activity">
    <reaction evidence="1">
        <text>glycerol + ATP = sn-glycerol 3-phosphate + ADP + H(+)</text>
        <dbReference type="Rhea" id="RHEA:21644"/>
        <dbReference type="ChEBI" id="CHEBI:15378"/>
        <dbReference type="ChEBI" id="CHEBI:17754"/>
        <dbReference type="ChEBI" id="CHEBI:30616"/>
        <dbReference type="ChEBI" id="CHEBI:57597"/>
        <dbReference type="ChEBI" id="CHEBI:456216"/>
        <dbReference type="EC" id="2.7.1.30"/>
    </reaction>
</comment>
<comment type="activity regulation">
    <text evidence="1">Inhibited by fructose 1,6-bisphosphate (FBP).</text>
</comment>
<comment type="pathway">
    <text evidence="1">Polyol metabolism; glycerol degradation via glycerol kinase pathway; sn-glycerol 3-phosphate from glycerol: step 1/1.</text>
</comment>
<comment type="similarity">
    <text evidence="1">Belongs to the FGGY kinase family.</text>
</comment>
<organism>
    <name type="scientific">Xylella fastidiosa (strain M23)</name>
    <dbReference type="NCBI Taxonomy" id="405441"/>
    <lineage>
        <taxon>Bacteria</taxon>
        <taxon>Pseudomonadati</taxon>
        <taxon>Pseudomonadota</taxon>
        <taxon>Gammaproteobacteria</taxon>
        <taxon>Lysobacterales</taxon>
        <taxon>Lysobacteraceae</taxon>
        <taxon>Xylella</taxon>
    </lineage>
</organism>
<reference key="1">
    <citation type="journal article" date="2010" name="J. Bacteriol.">
        <title>Whole genome sequences of two Xylella fastidiosa strains (M12 and M23) causing almond leaf scorch disease in California.</title>
        <authorList>
            <person name="Chen J."/>
            <person name="Xie G."/>
            <person name="Han S."/>
            <person name="Chertkov O."/>
            <person name="Sims D."/>
            <person name="Civerolo E.L."/>
        </authorList>
    </citation>
    <scope>NUCLEOTIDE SEQUENCE [LARGE SCALE GENOMIC DNA]</scope>
    <source>
        <strain>M23</strain>
    </source>
</reference>
<evidence type="ECO:0000255" key="1">
    <source>
        <dbReference type="HAMAP-Rule" id="MF_00186"/>
    </source>
</evidence>
<feature type="chain" id="PRO_1000098775" description="Glycerol kinase">
    <location>
        <begin position="1"/>
        <end position="499"/>
    </location>
</feature>
<feature type="binding site" evidence="1">
    <location>
        <position position="13"/>
    </location>
    <ligand>
        <name>ADP</name>
        <dbReference type="ChEBI" id="CHEBI:456216"/>
    </ligand>
</feature>
<feature type="binding site" evidence="1">
    <location>
        <position position="13"/>
    </location>
    <ligand>
        <name>ATP</name>
        <dbReference type="ChEBI" id="CHEBI:30616"/>
    </ligand>
</feature>
<feature type="binding site" evidence="1">
    <location>
        <position position="13"/>
    </location>
    <ligand>
        <name>sn-glycerol 3-phosphate</name>
        <dbReference type="ChEBI" id="CHEBI:57597"/>
    </ligand>
</feature>
<feature type="binding site" evidence="1">
    <location>
        <position position="14"/>
    </location>
    <ligand>
        <name>ATP</name>
        <dbReference type="ChEBI" id="CHEBI:30616"/>
    </ligand>
</feature>
<feature type="binding site" evidence="1">
    <location>
        <position position="15"/>
    </location>
    <ligand>
        <name>ATP</name>
        <dbReference type="ChEBI" id="CHEBI:30616"/>
    </ligand>
</feature>
<feature type="binding site" evidence="1">
    <location>
        <position position="17"/>
    </location>
    <ligand>
        <name>ADP</name>
        <dbReference type="ChEBI" id="CHEBI:456216"/>
    </ligand>
</feature>
<feature type="binding site" evidence="1">
    <location>
        <position position="83"/>
    </location>
    <ligand>
        <name>glycerol</name>
        <dbReference type="ChEBI" id="CHEBI:17754"/>
    </ligand>
</feature>
<feature type="binding site" evidence="1">
    <location>
        <position position="83"/>
    </location>
    <ligand>
        <name>sn-glycerol 3-phosphate</name>
        <dbReference type="ChEBI" id="CHEBI:57597"/>
    </ligand>
</feature>
<feature type="binding site" evidence="1">
    <location>
        <position position="84"/>
    </location>
    <ligand>
        <name>glycerol</name>
        <dbReference type="ChEBI" id="CHEBI:17754"/>
    </ligand>
</feature>
<feature type="binding site" evidence="1">
    <location>
        <position position="84"/>
    </location>
    <ligand>
        <name>sn-glycerol 3-phosphate</name>
        <dbReference type="ChEBI" id="CHEBI:57597"/>
    </ligand>
</feature>
<feature type="binding site" evidence="1">
    <location>
        <position position="135"/>
    </location>
    <ligand>
        <name>glycerol</name>
        <dbReference type="ChEBI" id="CHEBI:17754"/>
    </ligand>
</feature>
<feature type="binding site" evidence="1">
    <location>
        <position position="135"/>
    </location>
    <ligand>
        <name>sn-glycerol 3-phosphate</name>
        <dbReference type="ChEBI" id="CHEBI:57597"/>
    </ligand>
</feature>
<feature type="binding site" evidence="1">
    <location>
        <position position="245"/>
    </location>
    <ligand>
        <name>glycerol</name>
        <dbReference type="ChEBI" id="CHEBI:17754"/>
    </ligand>
</feature>
<feature type="binding site" evidence="1">
    <location>
        <position position="245"/>
    </location>
    <ligand>
        <name>sn-glycerol 3-phosphate</name>
        <dbReference type="ChEBI" id="CHEBI:57597"/>
    </ligand>
</feature>
<feature type="binding site" evidence="1">
    <location>
        <position position="246"/>
    </location>
    <ligand>
        <name>glycerol</name>
        <dbReference type="ChEBI" id="CHEBI:17754"/>
    </ligand>
</feature>
<feature type="binding site" evidence="1">
    <location>
        <position position="267"/>
    </location>
    <ligand>
        <name>ADP</name>
        <dbReference type="ChEBI" id="CHEBI:456216"/>
    </ligand>
</feature>
<feature type="binding site" evidence="1">
    <location>
        <position position="267"/>
    </location>
    <ligand>
        <name>ATP</name>
        <dbReference type="ChEBI" id="CHEBI:30616"/>
    </ligand>
</feature>
<feature type="binding site" evidence="1">
    <location>
        <position position="310"/>
    </location>
    <ligand>
        <name>ADP</name>
        <dbReference type="ChEBI" id="CHEBI:456216"/>
    </ligand>
</feature>
<feature type="binding site" evidence="1">
    <location>
        <position position="310"/>
    </location>
    <ligand>
        <name>ATP</name>
        <dbReference type="ChEBI" id="CHEBI:30616"/>
    </ligand>
</feature>
<feature type="binding site" evidence="1">
    <location>
        <position position="314"/>
    </location>
    <ligand>
        <name>ATP</name>
        <dbReference type="ChEBI" id="CHEBI:30616"/>
    </ligand>
</feature>
<feature type="binding site" evidence="1">
    <location>
        <position position="411"/>
    </location>
    <ligand>
        <name>ADP</name>
        <dbReference type="ChEBI" id="CHEBI:456216"/>
    </ligand>
</feature>
<feature type="binding site" evidence="1">
    <location>
        <position position="411"/>
    </location>
    <ligand>
        <name>ATP</name>
        <dbReference type="ChEBI" id="CHEBI:30616"/>
    </ligand>
</feature>
<feature type="binding site" evidence="1">
    <location>
        <position position="415"/>
    </location>
    <ligand>
        <name>ADP</name>
        <dbReference type="ChEBI" id="CHEBI:456216"/>
    </ligand>
</feature>
<sequence length="499" mass="55343">MKKKYILAIDQGTTSSRAILFDHKGRIIGMAQREFTQIFPQPGWVEHNPRDIMTSVYTTITELLNNTQIDVRAIAGIGITNQRETTVIWDRQTGQPIYNAIVWQSRQTKDICDQLTTAGYQDMVHAKTGLLIDAYFSGTKVKWILDHVENAHTQAARGELAFGTIDTWIIWNLTGGQVHVTDYSNASRTLLYDIHALRWDPDLLTMLDIPAAILPDVRSSSEIYGLTQTPYFHGEQIPIAGIAGDQQAALFGQACFEPGMAKNTYGTGCFMLMHTGKKAVESQNGLLTTIAWGLNGEIEYALEGSIFIAGSVVQWLRDGLRMFGKASDSQAYADRVSDNGGVYVVPAFVGLGAPYWRSDVRGAVFGLTRSTTKEHFVRAALESMAYQTRDVLSAMQADADIELKELRTDGAAITNDFMAQFQSDILAVPVLRSQIAETTALGAAYLAGLATGFWSSREEMTQHWAINRCFKPQMDKEQREHLYAGWKQAVEATLGFRVA</sequence>